<reference key="1">
    <citation type="submission" date="2002-04" db="EMBL/GenBank/DDBJ databases">
        <title>Corynebacterium efficiens icd gene for isocitrate dehydrogenase, complete cds.</title>
        <authorList>
            <person name="Nonaka G."/>
            <person name="Kimura E."/>
            <person name="Kawahara Y."/>
            <person name="Sugimoto S."/>
        </authorList>
    </citation>
    <scope>NUCLEOTIDE SEQUENCE [GENOMIC DNA]</scope>
    <source>
        <strain>DSM 44549 / YS-314 / AJ 12310 / JCM 11189 / NBRC 100395</strain>
    </source>
</reference>
<reference key="2">
    <citation type="journal article" date="2003" name="Genome Res.">
        <title>Comparative complete genome sequence analysis of the amino acid replacements responsible for the thermostability of Corynebacterium efficiens.</title>
        <authorList>
            <person name="Nishio Y."/>
            <person name="Nakamura Y."/>
            <person name="Kawarabayasi Y."/>
            <person name="Usuda Y."/>
            <person name="Kimura E."/>
            <person name="Sugimoto S."/>
            <person name="Matsui K."/>
            <person name="Yamagishi A."/>
            <person name="Kikuchi H."/>
            <person name="Ikeo K."/>
            <person name="Gojobori T."/>
        </authorList>
    </citation>
    <scope>NUCLEOTIDE SEQUENCE [LARGE SCALE GENOMIC DNA]</scope>
    <source>
        <strain>DSM 44549 / YS-314 / AJ 12310 / JCM 11189 / NBRC 100395</strain>
    </source>
</reference>
<organism>
    <name type="scientific">Corynebacterium efficiens (strain DSM 44549 / YS-314 / AJ 12310 / JCM 11189 / NBRC 100395)</name>
    <dbReference type="NCBI Taxonomy" id="196164"/>
    <lineage>
        <taxon>Bacteria</taxon>
        <taxon>Bacillati</taxon>
        <taxon>Actinomycetota</taxon>
        <taxon>Actinomycetes</taxon>
        <taxon>Mycobacteriales</taxon>
        <taxon>Corynebacteriaceae</taxon>
        <taxon>Corynebacterium</taxon>
    </lineage>
</organism>
<evidence type="ECO:0000250" key="1">
    <source>
        <dbReference type="UniProtKB" id="P16100"/>
    </source>
</evidence>
<evidence type="ECO:0000250" key="2">
    <source>
        <dbReference type="UniProtKB" id="P50216"/>
    </source>
</evidence>
<evidence type="ECO:0000303" key="3">
    <source ref="1"/>
</evidence>
<evidence type="ECO:0000305" key="4"/>
<dbReference type="EC" id="1.1.1.42" evidence="2"/>
<dbReference type="EMBL" id="AB083179">
    <property type="protein sequence ID" value="BAB88832.1"/>
    <property type="molecule type" value="Genomic_DNA"/>
</dbReference>
<dbReference type="EMBL" id="BA000035">
    <property type="protein sequence ID" value="BAC17492.1"/>
    <property type="status" value="ALT_INIT"/>
    <property type="molecule type" value="Genomic_DNA"/>
</dbReference>
<dbReference type="RefSeq" id="WP_006769639.1">
    <property type="nucleotide sequence ID" value="NC_004369.1"/>
</dbReference>
<dbReference type="SMR" id="Q8RQL9"/>
<dbReference type="STRING" id="196164.gene:10741084"/>
<dbReference type="KEGG" id="cef:CE0682"/>
<dbReference type="eggNOG" id="COG2838">
    <property type="taxonomic scope" value="Bacteria"/>
</dbReference>
<dbReference type="HOGENOM" id="CLU_025308_1_0_11"/>
<dbReference type="OrthoDB" id="9807643at2"/>
<dbReference type="Proteomes" id="UP000001409">
    <property type="component" value="Chromosome"/>
</dbReference>
<dbReference type="GO" id="GO:0004450">
    <property type="term" value="F:isocitrate dehydrogenase (NADP+) activity"/>
    <property type="evidence" value="ECO:0007669"/>
    <property type="project" value="UniProtKB-EC"/>
</dbReference>
<dbReference type="GO" id="GO:0046872">
    <property type="term" value="F:metal ion binding"/>
    <property type="evidence" value="ECO:0007669"/>
    <property type="project" value="UniProtKB-KW"/>
</dbReference>
<dbReference type="GO" id="GO:0006097">
    <property type="term" value="P:glyoxylate cycle"/>
    <property type="evidence" value="ECO:0007669"/>
    <property type="project" value="UniProtKB-KW"/>
</dbReference>
<dbReference type="GO" id="GO:0006099">
    <property type="term" value="P:tricarboxylic acid cycle"/>
    <property type="evidence" value="ECO:0007669"/>
    <property type="project" value="UniProtKB-KW"/>
</dbReference>
<dbReference type="InterPro" id="IPR004436">
    <property type="entry name" value="Isocitrate_DH_NADP_mono"/>
</dbReference>
<dbReference type="NCBIfam" id="TIGR00178">
    <property type="entry name" value="monomer_idh"/>
    <property type="match status" value="1"/>
</dbReference>
<dbReference type="PANTHER" id="PTHR36999:SF1">
    <property type="entry name" value="ISOCITRATE DEHYDROGENASE (NADP(+))"/>
    <property type="match status" value="1"/>
</dbReference>
<dbReference type="PANTHER" id="PTHR36999">
    <property type="entry name" value="ISOCITRATE DEHYDROGENASE [NADP]"/>
    <property type="match status" value="1"/>
</dbReference>
<dbReference type="Pfam" id="PF03971">
    <property type="entry name" value="IDH"/>
    <property type="match status" value="1"/>
</dbReference>
<dbReference type="PIRSF" id="PIRSF009407">
    <property type="entry name" value="IDH_monmr"/>
    <property type="match status" value="1"/>
</dbReference>
<dbReference type="SUPFAM" id="SSF53659">
    <property type="entry name" value="Isocitrate/Isopropylmalate dehydrogenase-like"/>
    <property type="match status" value="1"/>
</dbReference>
<comment type="function">
    <text evidence="2">Catalyzes the oxidative decarboxylation of isocitrate to 2-oxoglutarate and carbon dioxide with the concomitant reduction of NADP(+).</text>
</comment>
<comment type="catalytic activity">
    <reaction evidence="2">
        <text>D-threo-isocitrate + NADP(+) = 2-oxoglutarate + CO2 + NADPH</text>
        <dbReference type="Rhea" id="RHEA:19629"/>
        <dbReference type="ChEBI" id="CHEBI:15562"/>
        <dbReference type="ChEBI" id="CHEBI:16526"/>
        <dbReference type="ChEBI" id="CHEBI:16810"/>
        <dbReference type="ChEBI" id="CHEBI:57783"/>
        <dbReference type="ChEBI" id="CHEBI:58349"/>
        <dbReference type="EC" id="1.1.1.42"/>
    </reaction>
</comment>
<comment type="cofactor">
    <cofactor evidence="2">
        <name>Mg(2+)</name>
        <dbReference type="ChEBI" id="CHEBI:18420"/>
    </cofactor>
    <cofactor evidence="2">
        <name>Mn(2+)</name>
        <dbReference type="ChEBI" id="CHEBI:29035"/>
    </cofactor>
    <text evidence="2">Binds 1 Mg(2+) or Mn(2+) ion per subunit.</text>
</comment>
<comment type="subunit">
    <text evidence="2">Monomer.</text>
</comment>
<comment type="similarity">
    <text evidence="4">Belongs to the monomeric-type IDH family.</text>
</comment>
<comment type="sequence caution" evidence="4">
    <conflict type="erroneous initiation">
        <sequence resource="EMBL-CDS" id="BAC17492"/>
    </conflict>
</comment>
<keyword id="KW-0329">Glyoxylate bypass</keyword>
<keyword id="KW-0460">Magnesium</keyword>
<keyword id="KW-0464">Manganese</keyword>
<keyword id="KW-0479">Metal-binding</keyword>
<keyword id="KW-0521">NADP</keyword>
<keyword id="KW-0560">Oxidoreductase</keyword>
<keyword id="KW-1185">Reference proteome</keyword>
<keyword id="KW-0816">Tricarboxylic acid cycle</keyword>
<feature type="chain" id="PRO_0000083594" description="Isocitrate dehydrogenase [NADP]">
    <location>
        <begin position="1"/>
        <end position="729"/>
    </location>
</feature>
<feature type="binding site" evidence="1">
    <location>
        <position position="83"/>
    </location>
    <ligand>
        <name>NADP(+)</name>
        <dbReference type="ChEBI" id="CHEBI:58349"/>
    </ligand>
</feature>
<feature type="binding site" evidence="1">
    <location>
        <position position="85"/>
    </location>
    <ligand>
        <name>NADP(+)</name>
        <dbReference type="ChEBI" id="CHEBI:58349"/>
    </ligand>
</feature>
<feature type="binding site" evidence="1">
    <location>
        <position position="121"/>
    </location>
    <ligand>
        <name>D-threo-isocitrate</name>
        <dbReference type="ChEBI" id="CHEBI:15562"/>
    </ligand>
</feature>
<feature type="binding site" evidence="1">
    <location>
        <position position="124"/>
    </location>
    <ligand>
        <name>D-threo-isocitrate</name>
        <dbReference type="ChEBI" id="CHEBI:15562"/>
    </ligand>
</feature>
<feature type="binding site" evidence="1">
    <location>
        <position position="124"/>
    </location>
    <ligand>
        <name>NADP(+)</name>
        <dbReference type="ChEBI" id="CHEBI:58349"/>
    </ligand>
</feature>
<feature type="binding site" evidence="1">
    <location>
        <position position="128"/>
    </location>
    <ligand>
        <name>D-threo-isocitrate</name>
        <dbReference type="ChEBI" id="CHEBI:15562"/>
    </ligand>
</feature>
<feature type="binding site" evidence="1">
    <location>
        <position position="134"/>
    </location>
    <ligand>
        <name>D-threo-isocitrate</name>
        <dbReference type="ChEBI" id="CHEBI:15562"/>
    </ligand>
</feature>
<feature type="binding site" evidence="1">
    <location>
        <position position="244"/>
    </location>
    <ligand>
        <name>D-threo-isocitrate</name>
        <dbReference type="ChEBI" id="CHEBI:15562"/>
    </ligand>
</feature>
<feature type="binding site" evidence="2">
    <location>
        <position position="337"/>
    </location>
    <ligand>
        <name>Mg(2+)</name>
        <dbReference type="ChEBI" id="CHEBI:18420"/>
    </ligand>
</feature>
<feature type="binding site" evidence="1">
    <location>
        <position position="407"/>
    </location>
    <ligand>
        <name>D-threo-isocitrate</name>
        <dbReference type="ChEBI" id="CHEBI:15562"/>
    </ligand>
</feature>
<feature type="binding site" evidence="1">
    <location>
        <position position="534"/>
    </location>
    <ligand>
        <name>D-threo-isocitrate</name>
        <dbReference type="ChEBI" id="CHEBI:15562"/>
    </ligand>
</feature>
<feature type="binding site" evidence="2">
    <location>
        <position position="535"/>
    </location>
    <ligand>
        <name>Mg(2+)</name>
        <dbReference type="ChEBI" id="CHEBI:18420"/>
    </ligand>
</feature>
<feature type="binding site" evidence="2">
    <location>
        <position position="539"/>
    </location>
    <ligand>
        <name>Mg(2+)</name>
        <dbReference type="ChEBI" id="CHEBI:18420"/>
    </ligand>
</feature>
<feature type="binding site" evidence="1">
    <location>
        <position position="572"/>
    </location>
    <ligand>
        <name>NADP(+)</name>
        <dbReference type="ChEBI" id="CHEBI:58349"/>
    </ligand>
</feature>
<feature type="binding site" evidence="1">
    <location>
        <position position="576"/>
    </location>
    <ligand>
        <name>NADP(+)</name>
        <dbReference type="ChEBI" id="CHEBI:58349"/>
    </ligand>
</feature>
<feature type="binding site" evidence="1">
    <location>
        <position position="587"/>
    </location>
    <ligand>
        <name>NADP(+)</name>
        <dbReference type="ChEBI" id="CHEBI:58349"/>
    </ligand>
</feature>
<feature type="binding site" evidence="1">
    <location>
        <position position="589"/>
    </location>
    <ligand>
        <name>NADP(+)</name>
        <dbReference type="ChEBI" id="CHEBI:58349"/>
    </ligand>
</feature>
<feature type="binding site" evidence="1">
    <location>
        <position position="636"/>
    </location>
    <ligand>
        <name>NADP(+)</name>
        <dbReference type="ChEBI" id="CHEBI:58349"/>
    </ligand>
</feature>
<accession>Q8RQL9</accession>
<sequence>MAKIIWTRTDEAPLLATYSLKPVVEAFAATAGIEVETRDISLAGRILAQFADQLPEEQKVSDALAELGELAKTPEANIIKLPNISASVPQLKAAVKELQEQGYDLPEYEDAKDRYAAVIGSNVNPVLREGNSDRRAPVAVKNFVKKFPHRMGEWSADSKTNVATMGADDFRSNEKSVIMDEADTVVIKHVAADGTETVLKDSLPLLKGEVIDGTFISAKALDAFLLDQVKRAKEEGILFSAHMKATMMKVSDPIIFGHIVRAYFADVYAQYGEQLLAAGLNGENGLAAIYAGLDKLDNGAEIKAAFDKGLEEGPDLAMVNSAKGITNLHVPSDVIIDASMPAMIRTSGKMWNKDDQTQDALAVIPDSSYAGVYQTVIEDCRKNGAFDPTTMGTVPNVGLMAQKAEEYGSHDKTFRIEADGKVQVVASNGDVLIEHDVEKGDIWRACQTKDAPIQDWVKLAVNRARLSGMPAVFWLDPARAHDRNLTTLVEKYLADHDTEGLDIQILSPVEATQHAIDRIRRGEDTISVTGNVLRDYNTDLFPILELGTSAKMLSVVPLMAGGGLFETGAGGSAPKHVQQVIEENHLRWDSLGEFLALAESFRHELNTRNNTKAGVLADALDRATEKLLNEEKSPSRKVGEIDNRGSHFWLATYWADELANQTEDAELAETFAPVAEALNNQAADIDAALIGEQGKPVDLGGYYAPSDEKTSAIMRPVAAFNEIIDSLKK</sequence>
<name>IDH_COREF</name>
<gene>
    <name evidence="3" type="primary">icd</name>
    <name type="ordered locus">CE0682</name>
</gene>
<proteinExistence type="inferred from homology"/>
<protein>
    <recommendedName>
        <fullName evidence="2">Isocitrate dehydrogenase [NADP]</fullName>
        <shortName>IDH</shortName>
        <ecNumber evidence="2">1.1.1.42</ecNumber>
    </recommendedName>
    <alternativeName>
        <fullName>Oxalosuccinate decarboxylase</fullName>
    </alternativeName>
</protein>